<reference key="1">
    <citation type="journal article" date="2008" name="Chem. Biol. Interact.">
        <title>Extending the Bacillus cereus group genomics to putative food-borne pathogens of different toxicity.</title>
        <authorList>
            <person name="Lapidus A."/>
            <person name="Goltsman E."/>
            <person name="Auger S."/>
            <person name="Galleron N."/>
            <person name="Segurens B."/>
            <person name="Dossat C."/>
            <person name="Land M.L."/>
            <person name="Broussolle V."/>
            <person name="Brillard J."/>
            <person name="Guinebretiere M.-H."/>
            <person name="Sanchis V."/>
            <person name="Nguen-the C."/>
            <person name="Lereclus D."/>
            <person name="Richardson P."/>
            <person name="Wincker P."/>
            <person name="Weissenbach J."/>
            <person name="Ehrlich S.D."/>
            <person name="Sorokin A."/>
        </authorList>
    </citation>
    <scope>NUCLEOTIDE SEQUENCE [LARGE SCALE GENOMIC DNA]</scope>
    <source>
        <strain>DSM 22905 / CIP 110041 / 391-98 / NVH 391-98</strain>
    </source>
</reference>
<gene>
    <name evidence="1" type="primary">mtnW</name>
    <name type="ordered locus">Bcer98_2735</name>
</gene>
<proteinExistence type="inferred from homology"/>
<comment type="function">
    <text evidence="1">Catalyzes the enolization of 2,3-diketo-5-methylthiopentyl-1-phosphate (DK-MTP-1-P) into 2-hydroxy-3-keto-5-methylthiopentenyl-1-phosphate (HK-MTPenyl-1-P).</text>
</comment>
<comment type="catalytic activity">
    <reaction evidence="1">
        <text>5-methylsulfanyl-2,3-dioxopentyl phosphate = 2-hydroxy-5-methylsulfanyl-3-oxopent-1-enyl phosphate</text>
        <dbReference type="Rhea" id="RHEA:18769"/>
        <dbReference type="ChEBI" id="CHEBI:58828"/>
        <dbReference type="ChEBI" id="CHEBI:59505"/>
        <dbReference type="EC" id="5.3.2.5"/>
    </reaction>
</comment>
<comment type="cofactor">
    <cofactor evidence="1">
        <name>Mg(2+)</name>
        <dbReference type="ChEBI" id="CHEBI:18420"/>
    </cofactor>
    <text evidence="1">Binds 1 Mg(2+) ion per subunit.</text>
</comment>
<comment type="pathway">
    <text evidence="1">Amino-acid biosynthesis; L-methionine biosynthesis via salvage pathway; L-methionine from S-methyl-5-thio-alpha-D-ribose 1-phosphate: step 3/6.</text>
</comment>
<comment type="subunit">
    <text evidence="1">Homodimer.</text>
</comment>
<comment type="miscellaneous">
    <text evidence="1">Has no RuBP-carboxylation activity.</text>
</comment>
<comment type="similarity">
    <text evidence="1">Belongs to the RuBisCO large chain family. Type IV subfamily.</text>
</comment>
<accession>A7GS60</accession>
<organism>
    <name type="scientific">Bacillus cytotoxicus (strain DSM 22905 / CIP 110041 / 391-98 / NVH 391-98)</name>
    <dbReference type="NCBI Taxonomy" id="315749"/>
    <lineage>
        <taxon>Bacteria</taxon>
        <taxon>Bacillati</taxon>
        <taxon>Bacillota</taxon>
        <taxon>Bacilli</taxon>
        <taxon>Bacillales</taxon>
        <taxon>Bacillaceae</taxon>
        <taxon>Bacillus</taxon>
        <taxon>Bacillus cereus group</taxon>
    </lineage>
</organism>
<sequence length="414" mass="45489">MSGIIATYVIHDDSHNLTKKAEQIALGLTIGSWTHLPHLLQKQLKQHKGNVVHVEELPQQEEVNNYLGKKVTKGIIKIQYPSLNFSPDLPAILTTAFGKLSLDGEIKLIDLTFSDDLKRQFSGPKFGIEEVRKRLHVHNRPLLMSIFKGMIGRNIGYLKTQLRDQAIGGVDIVKDDEILFENALTPLEKRVRSGKEVLQSVYETYGHRTLYAVNITGRTYDVKENAKRAVNAGADLLLFNAFAYGLDVLQLLAEDQDINVPIMAHPAISGAYTSSKLYGFSHSLLLGKLLRYAGADFSLFPSPYGNVALEKKDALQIAETLTIVDSHLKRSFPVPSAGIHPGFVPFILRDFGNDVVINAGGGIHGHPNGAQGGGKAFRAAIDATLQGTPLHEVDDADLHTALQLWGNPSREVKI</sequence>
<protein>
    <recommendedName>
        <fullName evidence="1">2,3-diketo-5-methylthiopentyl-1-phosphate enolase</fullName>
        <shortName evidence="1">DK-MTP-1-P enolase</shortName>
        <ecNumber evidence="1">5.3.2.5</ecNumber>
    </recommendedName>
    <alternativeName>
        <fullName evidence="1">RuBisCO-like protein</fullName>
        <shortName evidence="1">RLP</shortName>
    </alternativeName>
</protein>
<dbReference type="EC" id="5.3.2.5" evidence="1"/>
<dbReference type="EMBL" id="CP000764">
    <property type="protein sequence ID" value="ABS22968.1"/>
    <property type="molecule type" value="Genomic_DNA"/>
</dbReference>
<dbReference type="RefSeq" id="WP_012095193.1">
    <property type="nucleotide sequence ID" value="NC_009674.1"/>
</dbReference>
<dbReference type="SMR" id="A7GS60"/>
<dbReference type="STRING" id="315749.Bcer98_2735"/>
<dbReference type="GeneID" id="33897989"/>
<dbReference type="KEGG" id="bcy:Bcer98_2735"/>
<dbReference type="eggNOG" id="COG1850">
    <property type="taxonomic scope" value="Bacteria"/>
</dbReference>
<dbReference type="HOGENOM" id="CLU_031450_3_1_9"/>
<dbReference type="OrthoDB" id="9770811at2"/>
<dbReference type="UniPathway" id="UPA00904">
    <property type="reaction ID" value="UER00876"/>
</dbReference>
<dbReference type="Proteomes" id="UP000002300">
    <property type="component" value="Chromosome"/>
</dbReference>
<dbReference type="GO" id="GO:0043715">
    <property type="term" value="F:2,3-diketo-5-methylthiopentyl-1-phosphate enolase activity"/>
    <property type="evidence" value="ECO:0007669"/>
    <property type="project" value="UniProtKB-UniRule"/>
</dbReference>
<dbReference type="GO" id="GO:0000287">
    <property type="term" value="F:magnesium ion binding"/>
    <property type="evidence" value="ECO:0007669"/>
    <property type="project" value="UniProtKB-UniRule"/>
</dbReference>
<dbReference type="GO" id="GO:0016984">
    <property type="term" value="F:ribulose-bisphosphate carboxylase activity"/>
    <property type="evidence" value="ECO:0007669"/>
    <property type="project" value="InterPro"/>
</dbReference>
<dbReference type="GO" id="GO:0015977">
    <property type="term" value="P:carbon fixation"/>
    <property type="evidence" value="ECO:0007669"/>
    <property type="project" value="InterPro"/>
</dbReference>
<dbReference type="GO" id="GO:0019509">
    <property type="term" value="P:L-methionine salvage from methylthioadenosine"/>
    <property type="evidence" value="ECO:0007669"/>
    <property type="project" value="UniProtKB-UniRule"/>
</dbReference>
<dbReference type="CDD" id="cd08209">
    <property type="entry name" value="RLP_DK-MTP-1-P-enolase"/>
    <property type="match status" value="1"/>
</dbReference>
<dbReference type="Gene3D" id="3.20.20.110">
    <property type="entry name" value="Ribulose bisphosphate carboxylase, large subunit, C-terminal domain"/>
    <property type="match status" value="1"/>
</dbReference>
<dbReference type="Gene3D" id="3.30.70.150">
    <property type="entry name" value="RuBisCO large subunit, N-terminal domain"/>
    <property type="match status" value="1"/>
</dbReference>
<dbReference type="HAMAP" id="MF_01679">
    <property type="entry name" value="Salvage_MtnW"/>
    <property type="match status" value="1"/>
</dbReference>
<dbReference type="InterPro" id="IPR017717">
    <property type="entry name" value="Diketo-Methiopentyl-P_enolase"/>
</dbReference>
<dbReference type="InterPro" id="IPR033966">
    <property type="entry name" value="RuBisCO"/>
</dbReference>
<dbReference type="InterPro" id="IPR000685">
    <property type="entry name" value="RuBisCO_lsu_C"/>
</dbReference>
<dbReference type="InterPro" id="IPR036376">
    <property type="entry name" value="RuBisCO_lsu_C_sf"/>
</dbReference>
<dbReference type="InterPro" id="IPR017443">
    <property type="entry name" value="RuBisCO_lsu_fd_N"/>
</dbReference>
<dbReference type="InterPro" id="IPR036422">
    <property type="entry name" value="RuBisCO_lsu_N_sf"/>
</dbReference>
<dbReference type="NCBIfam" id="NF007095">
    <property type="entry name" value="PRK09549.1"/>
    <property type="match status" value="1"/>
</dbReference>
<dbReference type="NCBIfam" id="TIGR03332">
    <property type="entry name" value="salvage_mtnW"/>
    <property type="match status" value="1"/>
</dbReference>
<dbReference type="PANTHER" id="PTHR42704">
    <property type="entry name" value="RIBULOSE BISPHOSPHATE CARBOXYLASE"/>
    <property type="match status" value="1"/>
</dbReference>
<dbReference type="PANTHER" id="PTHR42704:SF17">
    <property type="entry name" value="RIBULOSE BISPHOSPHATE CARBOXYLASE LARGE CHAIN"/>
    <property type="match status" value="1"/>
</dbReference>
<dbReference type="Pfam" id="PF00016">
    <property type="entry name" value="RuBisCO_large"/>
    <property type="match status" value="1"/>
</dbReference>
<dbReference type="Pfam" id="PF02788">
    <property type="entry name" value="RuBisCO_large_N"/>
    <property type="match status" value="1"/>
</dbReference>
<dbReference type="SFLD" id="SFLDF00157">
    <property type="entry name" value="2_3-diketo-5-methylthiopentyl"/>
    <property type="match status" value="1"/>
</dbReference>
<dbReference type="SFLD" id="SFLDS00014">
    <property type="entry name" value="RuBisCO"/>
    <property type="match status" value="1"/>
</dbReference>
<dbReference type="SUPFAM" id="SSF51649">
    <property type="entry name" value="RuBisCo, C-terminal domain"/>
    <property type="match status" value="1"/>
</dbReference>
<dbReference type="SUPFAM" id="SSF54966">
    <property type="entry name" value="RuBisCO, large subunit, small (N-terminal) domain"/>
    <property type="match status" value="1"/>
</dbReference>
<name>MTNW_BACCN</name>
<keyword id="KW-0028">Amino-acid biosynthesis</keyword>
<keyword id="KW-0413">Isomerase</keyword>
<keyword id="KW-0460">Magnesium</keyword>
<keyword id="KW-0479">Metal-binding</keyword>
<keyword id="KW-0486">Methionine biosynthesis</keyword>
<evidence type="ECO:0000255" key="1">
    <source>
        <dbReference type="HAMAP-Rule" id="MF_01679"/>
    </source>
</evidence>
<feature type="chain" id="PRO_0000357285" description="2,3-diketo-5-methylthiopentyl-1-phosphate enolase">
    <location>
        <begin position="1"/>
        <end position="414"/>
    </location>
</feature>
<feature type="active site" description="Proton acceptor" evidence="1">
    <location>
        <position position="99"/>
    </location>
</feature>
<feature type="binding site" evidence="1">
    <location>
        <position position="148"/>
    </location>
    <ligand>
        <name>substrate</name>
    </ligand>
</feature>
<feature type="binding site" evidence="1">
    <location>
        <begin position="174"/>
        <end position="177"/>
    </location>
    <ligand>
        <name>substrate</name>
    </ligand>
</feature>
<feature type="binding site" description="via carbamate group" evidence="1">
    <location>
        <position position="174"/>
    </location>
    <ligand>
        <name>Mg(2+)</name>
        <dbReference type="ChEBI" id="CHEBI:18420"/>
    </ligand>
</feature>
<feature type="binding site" evidence="1">
    <location>
        <position position="176"/>
    </location>
    <ligand>
        <name>Mg(2+)</name>
        <dbReference type="ChEBI" id="CHEBI:18420"/>
    </ligand>
</feature>
<feature type="binding site" evidence="1">
    <location>
        <position position="177"/>
    </location>
    <ligand>
        <name>Mg(2+)</name>
        <dbReference type="ChEBI" id="CHEBI:18420"/>
    </ligand>
</feature>
<feature type="binding site" evidence="1">
    <location>
        <position position="265"/>
    </location>
    <ligand>
        <name>substrate</name>
    </ligand>
</feature>
<feature type="binding site" evidence="1">
    <location>
        <position position="338"/>
    </location>
    <ligand>
        <name>substrate</name>
    </ligand>
</feature>
<feature type="binding site" evidence="1">
    <location>
        <begin position="360"/>
        <end position="361"/>
    </location>
    <ligand>
        <name>substrate</name>
    </ligand>
</feature>
<feature type="modified residue" description="N6-carboxylysine" evidence="1">
    <location>
        <position position="174"/>
    </location>
</feature>